<reference key="1">
    <citation type="journal article" date="2004" name="J. Bacteriol.">
        <title>Genome of bacteriophage P1.</title>
        <authorList>
            <person name="Lobocka M.B."/>
            <person name="Rose D.J."/>
            <person name="Plunkett G. III"/>
            <person name="Rusin M."/>
            <person name="Samojedny A."/>
            <person name="Lehnherr H."/>
            <person name="Yarmolinsky M.B."/>
            <person name="Blattner F.R."/>
        </authorList>
    </citation>
    <scope>NUCLEOTIDE SEQUENCE [GENOMIC DNA]</scope>
    <source>
        <strain>Mod749::IS5 c1.100 mutant</strain>
    </source>
</reference>
<reference key="2">
    <citation type="journal article" date="1990" name="Proc. Natl. Acad. Sci. U.S.A.">
        <title>Cleavage of the bacteriophage P1 packaging site (pac) is regulated by adenine methylation.</title>
        <authorList>
            <person name="Sternberg N."/>
            <person name="Coulby J."/>
        </authorList>
    </citation>
    <scope>FUNCTION</scope>
</reference>
<reference key="3">
    <citation type="journal article" date="2003" name="Nucleic Acids Res.">
        <title>A nomenclature for restriction enzymes, DNA methyltransferases, homing endonucleases and their genes.</title>
        <authorList>
            <person name="Roberts R.J."/>
            <person name="Belfort M."/>
            <person name="Bestor T."/>
            <person name="Bhagwat A.S."/>
            <person name="Bickle T.A."/>
            <person name="Bitinaite J."/>
            <person name="Blumenthal R.M."/>
            <person name="Degtyarev S.K."/>
            <person name="Dryden D.T."/>
            <person name="Dybvig K."/>
            <person name="Firman K."/>
            <person name="Gromova E.S."/>
            <person name="Gumport R.I."/>
            <person name="Halford S.E."/>
            <person name="Hattman S."/>
            <person name="Heitman J."/>
            <person name="Hornby D.P."/>
            <person name="Janulaitis A."/>
            <person name="Jeltsch A."/>
            <person name="Josephsen J."/>
            <person name="Kiss A."/>
            <person name="Klaenhammer T.R."/>
            <person name="Kobayashi I."/>
            <person name="Kong H."/>
            <person name="Krueger D.H."/>
            <person name="Lacks S."/>
            <person name="Marinus M.G."/>
            <person name="Miyahara M."/>
            <person name="Morgan R.D."/>
            <person name="Murray N.E."/>
            <person name="Nagaraja V."/>
            <person name="Piekarowicz A."/>
            <person name="Pingoud A."/>
            <person name="Raleigh E."/>
            <person name="Rao D.N."/>
            <person name="Reich N."/>
            <person name="Repin V.E."/>
            <person name="Selker E.U."/>
            <person name="Shaw P.C."/>
            <person name="Stein D.C."/>
            <person name="Stoddard B.L."/>
            <person name="Szybalski W."/>
            <person name="Trautner T.A."/>
            <person name="Van Etten J.L."/>
            <person name="Vitor J.M."/>
            <person name="Wilson G.G."/>
            <person name="Xu S.Y."/>
        </authorList>
    </citation>
    <scope>NOMENCLATURE</scope>
</reference>
<reference key="4">
    <citation type="journal article" date="2004" name="Biochem. Biophys. Res. Commun.">
        <title>Single-stranded DNA binding and methylation by EcoP1I DNA methyltransferase.</title>
        <authorList>
            <person name="Sistla S."/>
            <person name="Krishnamurthy V."/>
            <person name="Rao D.N."/>
        </authorList>
    </citation>
    <scope>FUNCTION</scope>
    <scope>COFACTOR</scope>
    <scope>CATALYTIC ACTIVITY</scope>
    <scope>BIOPHYSICOCHEMICAL PROPERTIES</scope>
</reference>
<reference key="5">
    <citation type="journal article" date="2010" name="Enzyme Res.">
        <title>Kinetics of Methylation by EcoP1I DNA Methyltransferase.</title>
        <authorList>
            <person name="Bheemanaik S."/>
            <person name="Sistla S."/>
            <person name="Krishnamurthy V."/>
            <person name="Arathi S."/>
            <person name="Desirazu N.R."/>
        </authorList>
    </citation>
    <scope>FUNCTION</scope>
    <scope>COFACTOR</scope>
    <scope>CATALYTIC ACTIVITY</scope>
    <scope>BIOPHYSICOCHEMICAL PROPERTIES</scope>
    <scope>SUBUNIT</scope>
</reference>
<organismHost>
    <name type="scientific">Enterobacteriaceae</name>
    <dbReference type="NCBI Taxonomy" id="543"/>
</organismHost>
<gene>
    <name type="primary">dmt</name>
</gene>
<sequence>MKELCYGSVCSGIEAASIAWEPLGMRPAWFAEIEPFPSAVLAHRWPHVANLGDMTKLAKKVLAGEIESPDVLVWGTPCQAFSIAGLRGGLDDERGALTLKYVELANAIDDKRSESFLKPTVIVWENVPGVLSSADNAFGCFLAGLAGEDAPFEPGDRPESGKSNAFWRWDGKTGCHAPKWPQCGCIYGPQRKVAWRILDAQYFGVAQRRRRVFVVASARTDLDPATVLFEFEGVRRNIAPRRKKKEIASAIIANGAAISGESLNPCLHADMPPSMKSTKAVNAFRMAAFGEYIDDETASTVKARDFKDATDLAVFSSTGAGFWSEGHGTLRAREQESHEHLVTLAFPERMSGTQHAATKNTSPSLMAKNPTAVCYEVRNAEVAVRRLTPVECERLQGFPDGHTLIPTEKRKKVNSDELAYLRNHYPDLSEEEAAMLAADGPRYKAIGNSMAIPVMRWIGDRITKAVCRQKEGSETKERKVKPAAEFERSIFKWAGGKFGVLEQIFRYLPEGKRLIEPFVGGGAVFTNAGYQENLLNDVNADLINFYKTLQREAHSLITLAHRFFQDYNTQEGYLAVRNAFNKQVYDDLHRAAAFLFLNRHCFNGLTRYNQAGEFNVGYGKYKTPYFPLQEMEAFLGAEGRSEFVCGDFAAVIEAAGEGDVIFCDPPYEPLPNTEGFTNYSGHDFKFEEQKRLVSLLTDAHRRGAKVLITNSGAPNIRELYHDSGFRVEPLFARRSVSCKGDTRGVAHDVLGILL</sequence>
<proteinExistence type="evidence at protein level"/>
<evidence type="ECO:0000255" key="1">
    <source>
        <dbReference type="PROSITE-ProRule" id="PRU01016"/>
    </source>
</evidence>
<evidence type="ECO:0000269" key="2">
    <source>
    </source>
</evidence>
<evidence type="ECO:0000269" key="3">
    <source>
    </source>
</evidence>
<evidence type="ECO:0000269" key="4">
    <source>
    </source>
</evidence>
<evidence type="ECO:0000303" key="5">
    <source>
    </source>
</evidence>
<evidence type="ECO:0000303" key="6">
    <source>
    </source>
</evidence>
<evidence type="ECO:0000305" key="7"/>
<feature type="chain" id="PRO_0000433211" description="DNA N-6-adenine-methyltransferase">
    <location>
        <begin position="1"/>
        <end position="754"/>
    </location>
</feature>
<feature type="domain" description="SAM-dependent MTase C5-type" evidence="1">
    <location>
        <begin position="4"/>
        <end position="469"/>
    </location>
</feature>
<feature type="active site" evidence="1">
    <location>
        <position position="78"/>
    </location>
</feature>
<protein>
    <recommendedName>
        <fullName evidence="7">DNA N-6-adenine-methyltransferase</fullName>
        <shortName evidence="7">DAM</shortName>
        <ecNumber evidence="2">2.1.1.72</ecNumber>
    </recommendedName>
    <alternativeName>
        <fullName evidence="6">EcoP1I DNA MTase</fullName>
        <shortName evidence="6">M.EcoP1I</shortName>
    </alternativeName>
    <alternativeName>
        <fullName evidence="5">Type II methyltransferase M.EphP1ORF2P</fullName>
        <shortName evidence="5">M.EphP1ORF2P</shortName>
    </alternativeName>
</protein>
<keyword id="KW-0945">Host-virus interaction</keyword>
<keyword id="KW-1090">Inhibition of host innate immune response by virus</keyword>
<keyword id="KW-0489">Methyltransferase</keyword>
<keyword id="KW-1185">Reference proteome</keyword>
<keyword id="KW-1258">Restriction-modification system evasion by virus</keyword>
<keyword id="KW-0949">S-adenosyl-L-methionine</keyword>
<keyword id="KW-0808">Transferase</keyword>
<keyword id="KW-0231">Viral genome packaging</keyword>
<keyword id="KW-0899">Viral immunoevasion</keyword>
<keyword id="KW-1188">Viral release from host cell</keyword>
<dbReference type="EC" id="2.1.1.72" evidence="2"/>
<dbReference type="EMBL" id="AF234172">
    <property type="protein sequence ID" value="AAQ14041.1"/>
    <property type="molecule type" value="Genomic_DNA"/>
</dbReference>
<dbReference type="RefSeq" id="YP_006537.1">
    <property type="nucleotide sequence ID" value="NC_005856.1"/>
</dbReference>
<dbReference type="SMR" id="Q71TL0"/>
<dbReference type="REBASE" id="7756">
    <property type="entry name" value="M.EphP1ORF2P"/>
</dbReference>
<dbReference type="GeneID" id="2777403"/>
<dbReference type="KEGG" id="vg:2777403"/>
<dbReference type="Proteomes" id="UP000008091">
    <property type="component" value="Genome"/>
</dbReference>
<dbReference type="GO" id="GO:1904047">
    <property type="term" value="F:S-adenosyl-L-methionine binding"/>
    <property type="evidence" value="ECO:0007669"/>
    <property type="project" value="TreeGrafter"/>
</dbReference>
<dbReference type="GO" id="GO:0043565">
    <property type="term" value="F:sequence-specific DNA binding"/>
    <property type="evidence" value="ECO:0007669"/>
    <property type="project" value="TreeGrafter"/>
</dbReference>
<dbReference type="GO" id="GO:0009007">
    <property type="term" value="F:site-specific DNA-methyltransferase (adenine-specific) activity"/>
    <property type="evidence" value="ECO:0000314"/>
    <property type="project" value="UniProtKB"/>
</dbReference>
<dbReference type="GO" id="GO:0009307">
    <property type="term" value="P:DNA restriction-modification system"/>
    <property type="evidence" value="ECO:0007669"/>
    <property type="project" value="InterPro"/>
</dbReference>
<dbReference type="GO" id="GO:0032259">
    <property type="term" value="P:methylation"/>
    <property type="evidence" value="ECO:0007669"/>
    <property type="project" value="UniProtKB-KW"/>
</dbReference>
<dbReference type="GO" id="GO:0006298">
    <property type="term" value="P:mismatch repair"/>
    <property type="evidence" value="ECO:0007669"/>
    <property type="project" value="TreeGrafter"/>
</dbReference>
<dbReference type="GO" id="GO:0099018">
    <property type="term" value="P:symbiont-mediated evasion of host restriction-modification system"/>
    <property type="evidence" value="ECO:0007669"/>
    <property type="project" value="UniProtKB-KW"/>
</dbReference>
<dbReference type="GO" id="GO:0052170">
    <property type="term" value="P:symbiont-mediated suppression of host innate immune response"/>
    <property type="evidence" value="ECO:0007669"/>
    <property type="project" value="UniProtKB-KW"/>
</dbReference>
<dbReference type="Gene3D" id="3.90.120.30">
    <property type="match status" value="1"/>
</dbReference>
<dbReference type="Gene3D" id="1.10.1020.10">
    <property type="entry name" value="Adenine-specific Methyltransferase, Domain 2"/>
    <property type="match status" value="1"/>
</dbReference>
<dbReference type="Gene3D" id="3.40.50.150">
    <property type="entry name" value="Vaccinia Virus protein VP39"/>
    <property type="match status" value="2"/>
</dbReference>
<dbReference type="InterPro" id="IPR023095">
    <property type="entry name" value="Ade_MeTrfase_dom_2"/>
</dbReference>
<dbReference type="InterPro" id="IPR018117">
    <property type="entry name" value="C5_DNA_meth_AS"/>
</dbReference>
<dbReference type="InterPro" id="IPR001525">
    <property type="entry name" value="C5_MeTfrase"/>
</dbReference>
<dbReference type="InterPro" id="IPR002052">
    <property type="entry name" value="DNA_methylase_N6_adenine_CS"/>
</dbReference>
<dbReference type="InterPro" id="IPR012327">
    <property type="entry name" value="MeTrfase_D12"/>
</dbReference>
<dbReference type="InterPro" id="IPR029063">
    <property type="entry name" value="SAM-dependent_MTases_sf"/>
</dbReference>
<dbReference type="NCBIfam" id="TIGR00571">
    <property type="entry name" value="dam"/>
    <property type="match status" value="1"/>
</dbReference>
<dbReference type="PANTHER" id="PTHR30481">
    <property type="entry name" value="DNA ADENINE METHYLASE"/>
    <property type="match status" value="1"/>
</dbReference>
<dbReference type="PANTHER" id="PTHR30481:SF3">
    <property type="entry name" value="DNA ADENINE METHYLASE"/>
    <property type="match status" value="1"/>
</dbReference>
<dbReference type="Pfam" id="PF00145">
    <property type="entry name" value="DNA_methylase"/>
    <property type="match status" value="2"/>
</dbReference>
<dbReference type="Pfam" id="PF02086">
    <property type="entry name" value="MethyltransfD12"/>
    <property type="match status" value="1"/>
</dbReference>
<dbReference type="PRINTS" id="PR00505">
    <property type="entry name" value="D12N6MTFRASE"/>
</dbReference>
<dbReference type="SUPFAM" id="SSF53335">
    <property type="entry name" value="S-adenosyl-L-methionine-dependent methyltransferases"/>
    <property type="match status" value="2"/>
</dbReference>
<dbReference type="PROSITE" id="PS00094">
    <property type="entry name" value="C5_MTASE_1"/>
    <property type="match status" value="1"/>
</dbReference>
<dbReference type="PROSITE" id="PS00092">
    <property type="entry name" value="N6_MTASE"/>
    <property type="match status" value="1"/>
</dbReference>
<dbReference type="PROSITE" id="PS51679">
    <property type="entry name" value="SAM_MT_C5"/>
    <property type="match status" value="1"/>
</dbReference>
<comment type="function">
    <text evidence="2 3 4 7">Methyltransferase that methylates adenine residues in the ssDNA and dsDNA sequence 5'-AGACC-3' (PubMed:14715260, PubMed:21048863). Essential for genome packaging because methylation within the pac site makes the latter cleavable (PubMed:2236019). May prevent degradation of viral DNA by the host restriction-modification antiviral defense system (Probable).</text>
</comment>
<comment type="catalytic activity">
    <reaction evidence="2 3">
        <text>a 2'-deoxyadenosine in DNA + S-adenosyl-L-methionine = an N(6)-methyl-2'-deoxyadenosine in DNA + S-adenosyl-L-homocysteine + H(+)</text>
        <dbReference type="Rhea" id="RHEA:15197"/>
        <dbReference type="Rhea" id="RHEA-COMP:12418"/>
        <dbReference type="Rhea" id="RHEA-COMP:12419"/>
        <dbReference type="ChEBI" id="CHEBI:15378"/>
        <dbReference type="ChEBI" id="CHEBI:57856"/>
        <dbReference type="ChEBI" id="CHEBI:59789"/>
        <dbReference type="ChEBI" id="CHEBI:90615"/>
        <dbReference type="ChEBI" id="CHEBI:90616"/>
        <dbReference type="EC" id="2.1.1.72"/>
    </reaction>
</comment>
<comment type="cofactor">
    <cofactor evidence="2 3">
        <name>Mg(2+)</name>
        <dbReference type="ChEBI" id="CHEBI:18420"/>
    </cofactor>
    <cofactor evidence="3">
        <name>Ca(2+)</name>
        <dbReference type="ChEBI" id="CHEBI:29108"/>
    </cofactor>
    <text evidence="2">Presence of Mg(2+) enhances the ssDNA binding ability of the enzyme.</text>
</comment>
<comment type="biophysicochemical properties">
    <kinetics>
        <KM evidence="2 3">0.78 uM for ssDNA</KM>
        <KM evidence="2 3">0.68 uM for dsDNA</KM>
        <KM evidence="3">0.27 uM for a 31mer duplex DNA</KM>
    </kinetics>
    <phDependence>
        <text evidence="2">Optimum pH is 8.0.</text>
    </phDependence>
</comment>
<comment type="subunit">
    <text evidence="3">Homodimer.</text>
</comment>
<comment type="similarity">
    <text evidence="1">Belongs to the class I-like SAM-binding methyltransferase superfamily. C5-methyltransferase family.</text>
</comment>
<name>DAM_BPP1</name>
<organism>
    <name type="scientific">Escherichia phage P1</name>
    <name type="common">Bacteriophage P1</name>
    <dbReference type="NCBI Taxonomy" id="2886926"/>
    <lineage>
        <taxon>Viruses</taxon>
        <taxon>Duplodnaviria</taxon>
        <taxon>Heunggongvirae</taxon>
        <taxon>Uroviricota</taxon>
        <taxon>Caudoviricetes</taxon>
        <taxon>Punavirus</taxon>
        <taxon>Punavirus P1</taxon>
    </lineage>
</organism>
<accession>Q71TL0</accession>